<proteinExistence type="evidence at protein level"/>
<accession>P53686</accession>
<accession>D6W3Z7</accession>
<gene>
    <name type="primary">HST2</name>
    <name type="ordered locus">YPL015C</name>
    <name type="ORF">LPA2C</name>
</gene>
<protein>
    <recommendedName>
        <fullName>NAD-dependent protein deacetylase HST2</fullName>
        <ecNumber evidence="1">2.3.1.286</ecNumber>
    </recommendedName>
    <alternativeName>
        <fullName>Homologous to SIR2 protein 2</fullName>
    </alternativeName>
    <alternativeName>
        <fullName>Regulatory protein SIR2 homolog 2</fullName>
    </alternativeName>
</protein>
<organism>
    <name type="scientific">Saccharomyces cerevisiae (strain ATCC 204508 / S288c)</name>
    <name type="common">Baker's yeast</name>
    <dbReference type="NCBI Taxonomy" id="559292"/>
    <lineage>
        <taxon>Eukaryota</taxon>
        <taxon>Fungi</taxon>
        <taxon>Dikarya</taxon>
        <taxon>Ascomycota</taxon>
        <taxon>Saccharomycotina</taxon>
        <taxon>Saccharomycetes</taxon>
        <taxon>Saccharomycetales</taxon>
        <taxon>Saccharomycetaceae</taxon>
        <taxon>Saccharomyces</taxon>
    </lineage>
</organism>
<name>HST2_YEAST</name>
<sequence length="357" mass="39979">MSVSTASTEMSVRKIAAHMKSNPNAKVIFMVGAGISTSCGIPDFRSPGTGLYHNLARLKLPYPEAVFDVDFFQSDPLPFYTLAKELYPGNFRPSKFHYLLKLFQDKDVLKRVYTQNIDTLERQAGVKDDLIIEAHGSFAHCHCIGCGKVYPPQVFKSKLAEHPIKDFVKCDVCGELVKPAIVFFGEDLPDSFSETWLNDSEWLREKITTSGKHPQQPLVIVVGTSLAVYPFASLPEEIPRKVKRVLCNLETVGDFKANKRPTDLIVHQYSDEFAEQLVEELGWQEDFEKILTAQGGMGDNSKEQLLEIVHDLENLSLDQSEHESADKKDKKLQRLNGHDSDEDGASNSSSSQKAAKE</sequence>
<reference key="1">
    <citation type="journal article" date="1995" name="Genes Dev.">
        <title>The SIR2 gene family, conserved from bacteria to humans, functions in silencing, cell cycle progression, and chromosome stability.</title>
        <authorList>
            <person name="Brachmann C.B."/>
            <person name="Sherman J.M."/>
            <person name="Devine S.E."/>
            <person name="Cameron E.E."/>
            <person name="Pillus L."/>
            <person name="Boeke J.D."/>
        </authorList>
    </citation>
    <scope>NUCLEOTIDE SEQUENCE [GENOMIC DNA]</scope>
    <source>
        <strain>S288c / YPH1</strain>
    </source>
</reference>
<reference key="2">
    <citation type="journal article" date="1997" name="Nature">
        <title>The nucleotide sequence of Saccharomyces cerevisiae chromosome XVI.</title>
        <authorList>
            <person name="Bussey H."/>
            <person name="Storms R.K."/>
            <person name="Ahmed A."/>
            <person name="Albermann K."/>
            <person name="Allen E."/>
            <person name="Ansorge W."/>
            <person name="Araujo R."/>
            <person name="Aparicio A."/>
            <person name="Barrell B.G."/>
            <person name="Badcock K."/>
            <person name="Benes V."/>
            <person name="Botstein D."/>
            <person name="Bowman S."/>
            <person name="Brueckner M."/>
            <person name="Carpenter J."/>
            <person name="Cherry J.M."/>
            <person name="Chung E."/>
            <person name="Churcher C.M."/>
            <person name="Coster F."/>
            <person name="Davis K."/>
            <person name="Davis R.W."/>
            <person name="Dietrich F.S."/>
            <person name="Delius H."/>
            <person name="DiPaolo T."/>
            <person name="Dubois E."/>
            <person name="Duesterhoeft A."/>
            <person name="Duncan M."/>
            <person name="Floeth M."/>
            <person name="Fortin N."/>
            <person name="Friesen J.D."/>
            <person name="Fritz C."/>
            <person name="Goffeau A."/>
            <person name="Hall J."/>
            <person name="Hebling U."/>
            <person name="Heumann K."/>
            <person name="Hilbert H."/>
            <person name="Hillier L.W."/>
            <person name="Hunicke-Smith S."/>
            <person name="Hyman R.W."/>
            <person name="Johnston M."/>
            <person name="Kalman S."/>
            <person name="Kleine K."/>
            <person name="Komp C."/>
            <person name="Kurdi O."/>
            <person name="Lashkari D."/>
            <person name="Lew H."/>
            <person name="Lin A."/>
            <person name="Lin D."/>
            <person name="Louis E.J."/>
            <person name="Marathe R."/>
            <person name="Messenguy F."/>
            <person name="Mewes H.-W."/>
            <person name="Mirtipati S."/>
            <person name="Moestl D."/>
            <person name="Mueller-Auer S."/>
            <person name="Namath A."/>
            <person name="Nentwich U."/>
            <person name="Oefner P."/>
            <person name="Pearson D."/>
            <person name="Petel F.X."/>
            <person name="Pohl T.M."/>
            <person name="Purnelle B."/>
            <person name="Rajandream M.A."/>
            <person name="Rechmann S."/>
            <person name="Rieger M."/>
            <person name="Riles L."/>
            <person name="Roberts D."/>
            <person name="Schaefer M."/>
            <person name="Scharfe M."/>
            <person name="Scherens B."/>
            <person name="Schramm S."/>
            <person name="Schroeder M."/>
            <person name="Sdicu A.-M."/>
            <person name="Tettelin H."/>
            <person name="Urrestarazu L.A."/>
            <person name="Ushinsky S."/>
            <person name="Vierendeels F."/>
            <person name="Vissers S."/>
            <person name="Voss H."/>
            <person name="Walsh S.V."/>
            <person name="Wambutt R."/>
            <person name="Wang Y."/>
            <person name="Wedler E."/>
            <person name="Wedler H."/>
            <person name="Winnett E."/>
            <person name="Zhong W.-W."/>
            <person name="Zollner A."/>
            <person name="Vo D.H."/>
            <person name="Hani J."/>
        </authorList>
    </citation>
    <scope>NUCLEOTIDE SEQUENCE [LARGE SCALE GENOMIC DNA]</scope>
    <source>
        <strain>ATCC 204508 / S288c</strain>
    </source>
</reference>
<reference key="3">
    <citation type="journal article" date="2014" name="G3 (Bethesda)">
        <title>The reference genome sequence of Saccharomyces cerevisiae: Then and now.</title>
        <authorList>
            <person name="Engel S.R."/>
            <person name="Dietrich F.S."/>
            <person name="Fisk D.G."/>
            <person name="Binkley G."/>
            <person name="Balakrishnan R."/>
            <person name="Costanzo M.C."/>
            <person name="Dwight S.S."/>
            <person name="Hitz B.C."/>
            <person name="Karra K."/>
            <person name="Nash R.S."/>
            <person name="Weng S."/>
            <person name="Wong E.D."/>
            <person name="Lloyd P."/>
            <person name="Skrzypek M.S."/>
            <person name="Miyasato S.R."/>
            <person name="Simison M."/>
            <person name="Cherry J.M."/>
        </authorList>
    </citation>
    <scope>GENOME REANNOTATION</scope>
    <source>
        <strain>ATCC 204508 / S288c</strain>
    </source>
</reference>
<reference key="4">
    <citation type="journal article" date="2007" name="Genome Res.">
        <title>Approaching a complete repository of sequence-verified protein-encoding clones for Saccharomyces cerevisiae.</title>
        <authorList>
            <person name="Hu Y."/>
            <person name="Rolfs A."/>
            <person name="Bhullar B."/>
            <person name="Murthy T.V.S."/>
            <person name="Zhu C."/>
            <person name="Berger M.F."/>
            <person name="Camargo A.A."/>
            <person name="Kelley F."/>
            <person name="McCarron S."/>
            <person name="Jepson D."/>
            <person name="Richardson A."/>
            <person name="Raphael J."/>
            <person name="Moreira D."/>
            <person name="Taycher E."/>
            <person name="Zuo D."/>
            <person name="Mohr S."/>
            <person name="Kane M.F."/>
            <person name="Williamson J."/>
            <person name="Simpson A.J.G."/>
            <person name="Bulyk M.L."/>
            <person name="Harlow E."/>
            <person name="Marsischky G."/>
            <person name="Kolodner R.D."/>
            <person name="LaBaer J."/>
        </authorList>
    </citation>
    <scope>NUCLEOTIDE SEQUENCE [GENOMIC DNA]</scope>
    <source>
        <strain>ATCC 204508 / S288c</strain>
    </source>
</reference>
<reference key="5">
    <citation type="journal article" date="2000" name="Proc. Natl. Acad. Sci. U.S.A.">
        <title>The silencing protein SIR2 and its homologs are NAD-dependent protein deacetylases.</title>
        <authorList>
            <person name="Landry J."/>
            <person name="Sutton A."/>
            <person name="Tafrov S.T."/>
            <person name="Heller R.C."/>
            <person name="Stebbins J."/>
            <person name="Pillus L."/>
            <person name="Sternglanz R."/>
        </authorList>
    </citation>
    <scope>FUNCTION</scope>
</reference>
<reference key="6">
    <citation type="journal article" date="2000" name="Proc. Natl. Acad. Sci. U.S.A.">
        <title>Silent information regulator 2 family of NAD- dependent histone/protein deacetylases generates a unique product, 1-O-acetyl-ADP-ribose.</title>
        <authorList>
            <person name="Tanner K.G."/>
            <person name="Landry J."/>
            <person name="Sternglanz R."/>
            <person name="Denu J.M."/>
        </authorList>
    </citation>
    <scope>FUNCTION</scope>
    <scope>BIOPHYSICOCHEMICAL PROPERTIES</scope>
</reference>
<reference key="7">
    <citation type="journal article" date="2001" name="EMBO J.">
        <title>A cytosolic NAD-dependent deacetylase, Hst2p, can modulate nucleolar and telomeric silencing in yeast.</title>
        <authorList>
            <person name="Perrod S."/>
            <person name="Cockell M.M."/>
            <person name="Laroche T."/>
            <person name="Renauld H."/>
            <person name="Ducrest A.L."/>
            <person name="Bonnard C."/>
            <person name="Gasser S.M."/>
        </authorList>
    </citation>
    <scope>FUNCTION</scope>
    <scope>SUBCELLULAR LOCATION</scope>
</reference>
<reference key="8">
    <citation type="journal article" date="2003" name="Nature">
        <title>Global analysis of protein localization in budding yeast.</title>
        <authorList>
            <person name="Huh W.-K."/>
            <person name="Falvo J.V."/>
            <person name="Gerke L.C."/>
            <person name="Carroll A.S."/>
            <person name="Howson R.W."/>
            <person name="Weissman J.S."/>
            <person name="O'Shea E.K."/>
        </authorList>
    </citation>
    <scope>SUBCELLULAR LOCATION [LARGE SCALE ANALYSIS]</scope>
</reference>
<reference key="9">
    <citation type="journal article" date="2003" name="Nature">
        <title>Global analysis of protein expression in yeast.</title>
        <authorList>
            <person name="Ghaemmaghami S."/>
            <person name="Huh W.-K."/>
            <person name="Bower K."/>
            <person name="Howson R.W."/>
            <person name="Belle A."/>
            <person name="Dephoure N."/>
            <person name="O'Shea E.K."/>
            <person name="Weissman J.S."/>
        </authorList>
    </citation>
    <scope>LEVEL OF PROTEIN EXPRESSION [LARGE SCALE ANALYSIS]</scope>
</reference>
<reference key="10">
    <citation type="journal article" date="2004" name="Biochemistry">
        <title>Substrate specificity and kinetic mechanism of the Sir2 family of NAD+-dependent histone/protein deacetylases.</title>
        <authorList>
            <person name="Borra M.T."/>
            <person name="Langer M.R."/>
            <person name="Slama J.T."/>
            <person name="Denu J.M."/>
        </authorList>
    </citation>
    <scope>FUNCTION</scope>
    <scope>BIOPHYSICOCHEMICAL PROPERTIES</scope>
</reference>
<reference key="11">
    <citation type="journal article" date="2006" name="EMBO Rep.">
        <title>Nuclear export modulates the cytoplasmic Sir2 homologue Hst2.</title>
        <authorList>
            <person name="Wilson J.M."/>
            <person name="Le V.Q."/>
            <person name="Zimmerman C."/>
            <person name="Marmorstein R."/>
            <person name="Pillus L."/>
        </authorList>
    </citation>
    <scope>FUNCTION</scope>
    <scope>SUBCELLULAR LOCATION</scope>
</reference>
<reference key="12">
    <citation type="journal article" date="2006" name="J. Biol. Chem.">
        <title>Use of substrate analogs and mutagenesis to study substrate binding and catalysis in the Sir2 family of NAD-dependent protein deacetylases.</title>
        <authorList>
            <person name="Khan A.N."/>
            <person name="Lewis P.N."/>
        </authorList>
    </citation>
    <scope>CATALYTIC ACTIVITY</scope>
    <scope>ACTIVITY REGULATION</scope>
    <scope>BIOPHYSICOCHEMICAL PROPERTIES</scope>
</reference>
<reference key="13">
    <citation type="journal article" date="2008" name="Mol. Cell. Proteomics">
        <title>A multidimensional chromatography technology for in-depth phosphoproteome analysis.</title>
        <authorList>
            <person name="Albuquerque C.P."/>
            <person name="Smolka M.B."/>
            <person name="Payne S.H."/>
            <person name="Bafna V."/>
            <person name="Eng J."/>
            <person name="Zhou H."/>
        </authorList>
    </citation>
    <scope>PHOSPHORYLATION [LARGE SCALE ANALYSIS] AT SER-340</scope>
    <scope>IDENTIFICATION BY MASS SPECTROMETRY [LARGE SCALE ANALYSIS]</scope>
</reference>
<reference key="14">
    <citation type="journal article" date="2010" name="J. Phys. Chem. B">
        <title>Investigation of the catalytic mechanism of Sir2 enzyme with QM/MM approach: SN1 vs SN2?</title>
        <authorList>
            <person name="Liang Z."/>
            <person name="Shi T."/>
            <person name="Ouyang S."/>
            <person name="Li H."/>
            <person name="Yu K."/>
            <person name="Zhu W."/>
            <person name="Luo C."/>
            <person name="Jiang H."/>
        </authorList>
    </citation>
    <scope>ACTIVE SITE</scope>
</reference>
<reference key="15">
    <citation type="journal article" date="2012" name="Proc. Natl. Acad. Sci. U.S.A.">
        <title>N-terminal acetylome analyses and functional insights of the N-terminal acetyltransferase NatB.</title>
        <authorList>
            <person name="Van Damme P."/>
            <person name="Lasa M."/>
            <person name="Polevoda B."/>
            <person name="Gazquez C."/>
            <person name="Elosegui-Artola A."/>
            <person name="Kim D.S."/>
            <person name="De Juan-Pardo E."/>
            <person name="Demeyer K."/>
            <person name="Hole K."/>
            <person name="Larrea E."/>
            <person name="Timmerman E."/>
            <person name="Prieto J."/>
            <person name="Arnesen T."/>
            <person name="Sherman F."/>
            <person name="Gevaert K."/>
            <person name="Aldabe R."/>
        </authorList>
    </citation>
    <scope>ACETYLATION [LARGE SCALE ANALYSIS] AT SER-2</scope>
    <scope>CLEAVAGE OF INITIATOR METHIONINE [LARGE SCALE ANALYSIS]</scope>
    <scope>IDENTIFICATION BY MASS SPECTROMETRY [LARGE SCALE ANALYSIS]</scope>
</reference>
<reference key="16">
    <citation type="journal article" date="2003" name="Nat. Struct. Biol.">
        <title>Structure and autoregulation of the yeast Hst2 homolog of Sir2.</title>
        <authorList>
            <person name="Zhao K."/>
            <person name="Chai X."/>
            <person name="Clements A."/>
            <person name="Marmorstein R."/>
        </authorList>
    </citation>
    <scope>X-RAY CRYSTALLOGRAPHY (2.5 ANGSTROMS) IN COMPLEX WITH PEPTIDE SUBSTRATE; ZINC AND NAD</scope>
</reference>
<reference key="17">
    <citation type="journal article" date="2003" name="Structure">
        <title>Structure of the yeast Hst2 protein deacetylase in ternary complex with 2'-O-acetyl ADP ribose and histone peptide.</title>
        <authorList>
            <person name="Zhao K."/>
            <person name="Chai X."/>
            <person name="Marmorstein R."/>
        </authorList>
    </citation>
    <scope>X-RAY CRYSTALLOGRAPHY (1.50 ANGSTROMS) OF 5-293 IN COMPLEX WITH SUBSTRATE ANALOG; PEPTIDE SUBSTRATE AND ZINC</scope>
    <scope>SUBUNIT</scope>
</reference>
<reference key="18">
    <citation type="journal article" date="2004" name="Proc. Natl. Acad. Sci. U.S.A.">
        <title>Structural basis for nicotinamide cleavage and ADP-ribose transfer by NAD(+)-dependent Sir2 histone/protein deacetylases.</title>
        <authorList>
            <person name="Zhao K."/>
            <person name="Harshaw R."/>
            <person name="Chai X."/>
            <person name="Marmorstein R."/>
        </authorList>
    </citation>
    <scope>X-RAY CRYSTALLOGRAPHY (1.5 ANGSTROMS) OF 1-294 IN COMPLEX WITH PEPTIDE SUBSTRATE; ZINC AND NAD</scope>
</reference>
<reference key="19">
    <citation type="journal article" date="2007" name="Mol. Cell">
        <title>Structural basis for nicotinamide inhibition and base exchange in Sir2 enzymes.</title>
        <authorList>
            <person name="Sanders B.D."/>
            <person name="Zhao K."/>
            <person name="Slama J.T."/>
            <person name="Marmorstein R."/>
        </authorList>
    </citation>
    <scope>X-RAY CRYSTALLOGRAPHY (2.00 ANGSTROMS) OF 1-294 IN COMPLEX WITH PEPTIDE SUBSTRATE; NICOTINAMIDE AND ZINC</scope>
    <scope>MUTAGENESIS OF 117</scope>
    <scope>BIOPHYSICOCHEMICAL PROPERTIES</scope>
</reference>
<keyword id="KW-0002">3D-structure</keyword>
<keyword id="KW-0007">Acetylation</keyword>
<keyword id="KW-0963">Cytoplasm</keyword>
<keyword id="KW-0479">Metal-binding</keyword>
<keyword id="KW-0520">NAD</keyword>
<keyword id="KW-0539">Nucleus</keyword>
<keyword id="KW-0597">Phosphoprotein</keyword>
<keyword id="KW-1185">Reference proteome</keyword>
<keyword id="KW-0678">Repressor</keyword>
<keyword id="KW-0804">Transcription</keyword>
<keyword id="KW-0805">Transcription regulation</keyword>
<keyword id="KW-0808">Transferase</keyword>
<keyword id="KW-0862">Zinc</keyword>
<comment type="function">
    <text evidence="3 4 5 10 12">NAD-dependent histone deacetylase that is involved in nuclear silencing events. Derepresses subtelomeric silencing and increases repression in nucleolar (rDNA) silencing. Its function is negatively regulated by active nuclear export.</text>
</comment>
<comment type="catalytic activity">
    <reaction evidence="1 11">
        <text>N(6)-acetyl-L-lysyl-[protein] + NAD(+) + H2O = 2''-O-acetyl-ADP-D-ribose + nicotinamide + L-lysyl-[protein]</text>
        <dbReference type="Rhea" id="RHEA:43636"/>
        <dbReference type="Rhea" id="RHEA-COMP:9752"/>
        <dbReference type="Rhea" id="RHEA-COMP:10731"/>
        <dbReference type="ChEBI" id="CHEBI:15377"/>
        <dbReference type="ChEBI" id="CHEBI:17154"/>
        <dbReference type="ChEBI" id="CHEBI:29969"/>
        <dbReference type="ChEBI" id="CHEBI:57540"/>
        <dbReference type="ChEBI" id="CHEBI:61930"/>
        <dbReference type="ChEBI" id="CHEBI:83767"/>
        <dbReference type="EC" id="2.3.1.286"/>
    </reaction>
</comment>
<comment type="cofactor">
    <cofactor>
        <name>Zn(2+)</name>
        <dbReference type="ChEBI" id="CHEBI:29105"/>
    </cofactor>
    <text>Binds 1 zinc ion per subunit.</text>
</comment>
<comment type="activity regulation">
    <text evidence="11">Inhibited by ADP-ribose and nicotinamide.</text>
</comment>
<comment type="biophysicochemical properties">
    <kinetics>
        <KM evidence="4 10 11 13">10.2 uM for NAD(+)</KM>
        <KM evidence="4 10 11 13">0.92 uM for acetylated poly-L-lysine</KM>
        <KM evidence="4 10 11 13">0.5 uM for a synthetic histone H3K14 acetyllysine peptide</KM>
    </kinetics>
</comment>
<comment type="subunit">
    <text evidence="6 8 9 13">Homotrimer. Monomer. Homotrimeric in its unliganded state. Undergoes a trimer-monomer transition upon acetyl-lysine substrate binding.</text>
</comment>
<comment type="subcellular location">
    <subcellularLocation>
        <location>Cytoplasm</location>
    </subcellularLocation>
    <subcellularLocation>
        <location>Nucleus</location>
    </subcellularLocation>
    <text>Shuttles between the nucleus and cytoplasm, but is largely cytoplasmic owing to efficient nuclear export. Nuclear exclusion is mediated by the exportin CRM1.</text>
</comment>
<comment type="miscellaneous">
    <text evidence="7">Present with 5260 molecules/cell in log phase SD medium.</text>
</comment>
<comment type="similarity">
    <text evidence="15">Belongs to the sirtuin family. Class I subfamily.</text>
</comment>
<feature type="initiator methionine" description="Removed" evidence="17">
    <location>
        <position position="1"/>
    </location>
</feature>
<feature type="chain" id="PRO_0000110282" description="NAD-dependent protein deacetylase HST2">
    <location>
        <begin position="2"/>
        <end position="357"/>
    </location>
</feature>
<feature type="domain" description="Deacetylase sirtuin-type" evidence="1">
    <location>
        <begin position="5"/>
        <end position="284"/>
    </location>
</feature>
<feature type="region of interest" description="Disordered" evidence="2">
    <location>
        <begin position="317"/>
        <end position="357"/>
    </location>
</feature>
<feature type="compositionally biased region" description="Basic and acidic residues" evidence="2">
    <location>
        <begin position="317"/>
        <end position="329"/>
    </location>
</feature>
<feature type="active site" description="Proton acceptor" evidence="1 14">
    <location>
        <position position="135"/>
    </location>
</feature>
<feature type="binding site" evidence="6 9">
    <location>
        <begin position="32"/>
        <end position="52"/>
    </location>
    <ligand>
        <name>NAD(+)</name>
        <dbReference type="ChEBI" id="CHEBI:57540"/>
    </ligand>
</feature>
<feature type="binding site" evidence="6 9">
    <location>
        <begin position="115"/>
        <end position="118"/>
    </location>
    <ligand>
        <name>NAD(+)</name>
        <dbReference type="ChEBI" id="CHEBI:57540"/>
    </ligand>
</feature>
<feature type="binding site" evidence="1 6 8 9 13">
    <location>
        <position position="143"/>
    </location>
    <ligand>
        <name>Zn(2+)</name>
        <dbReference type="ChEBI" id="CHEBI:29105"/>
    </ligand>
</feature>
<feature type="binding site" evidence="1 6 8 9 13">
    <location>
        <position position="146"/>
    </location>
    <ligand>
        <name>Zn(2+)</name>
        <dbReference type="ChEBI" id="CHEBI:29105"/>
    </ligand>
</feature>
<feature type="binding site" evidence="1 6 8 9 13">
    <location>
        <position position="170"/>
    </location>
    <ligand>
        <name>Zn(2+)</name>
        <dbReference type="ChEBI" id="CHEBI:29105"/>
    </ligand>
</feature>
<feature type="binding site" evidence="1 6 8 9 13">
    <location>
        <position position="173"/>
    </location>
    <ligand>
        <name>Zn(2+)</name>
        <dbReference type="ChEBI" id="CHEBI:29105"/>
    </ligand>
</feature>
<feature type="binding site" evidence="6 9">
    <location>
        <begin position="223"/>
        <end position="225"/>
    </location>
    <ligand>
        <name>NAD(+)</name>
        <dbReference type="ChEBI" id="CHEBI:57540"/>
    </ligand>
</feature>
<feature type="binding site" evidence="6 9">
    <location>
        <begin position="248"/>
        <end position="250"/>
    </location>
    <ligand>
        <name>NAD(+)</name>
        <dbReference type="ChEBI" id="CHEBI:57540"/>
    </ligand>
</feature>
<feature type="binding site" evidence="6 9">
    <location>
        <position position="270"/>
    </location>
    <ligand>
        <name>NAD(+)</name>
        <dbReference type="ChEBI" id="CHEBI:57540"/>
    </ligand>
</feature>
<feature type="modified residue" description="N-acetylserine" evidence="17">
    <location>
        <position position="2"/>
    </location>
</feature>
<feature type="modified residue" description="Phosphoserine" evidence="16">
    <location>
        <position position="340"/>
    </location>
</feature>
<feature type="mutagenesis site" description="Nearly or completely catalytically inactive." evidence="13">
    <original>I</original>
    <variation>A</variation>
    <variation>D</variation>
    <variation>H</variation>
    <variation>W</variation>
    <variation>Y</variation>
    <location>
        <position position="117"/>
    </location>
</feature>
<feature type="mutagenesis site" description="Near wild-type activity for deacetylation. Increases slightly the KM for NAD(+) to 25 uM." evidence="13">
    <original>I</original>
    <variation>F</variation>
    <variation>V</variation>
    <location>
        <position position="117"/>
    </location>
</feature>
<feature type="strand" evidence="20">
    <location>
        <begin position="3"/>
        <end position="6"/>
    </location>
</feature>
<feature type="helix" evidence="19">
    <location>
        <begin position="9"/>
        <end position="21"/>
    </location>
</feature>
<feature type="strand" evidence="19">
    <location>
        <begin position="27"/>
        <end position="31"/>
    </location>
</feature>
<feature type="helix" evidence="19">
    <location>
        <begin position="33"/>
        <end position="39"/>
    </location>
</feature>
<feature type="strand" evidence="19">
    <location>
        <begin position="44"/>
        <end position="46"/>
    </location>
</feature>
<feature type="turn" evidence="19">
    <location>
        <begin position="47"/>
        <end position="49"/>
    </location>
</feature>
<feature type="helix" evidence="19">
    <location>
        <begin position="51"/>
        <end position="53"/>
    </location>
</feature>
<feature type="helix" evidence="19">
    <location>
        <begin position="56"/>
        <end position="58"/>
    </location>
</feature>
<feature type="helix" evidence="19">
    <location>
        <begin position="63"/>
        <end position="67"/>
    </location>
</feature>
<feature type="helix" evidence="19">
    <location>
        <begin position="69"/>
        <end position="74"/>
    </location>
</feature>
<feature type="helix" evidence="19">
    <location>
        <begin position="77"/>
        <end position="86"/>
    </location>
</feature>
<feature type="strand" evidence="19">
    <location>
        <begin position="88"/>
        <end position="90"/>
    </location>
</feature>
<feature type="helix" evidence="19">
    <location>
        <begin position="95"/>
        <end position="105"/>
    </location>
</feature>
<feature type="strand" evidence="19">
    <location>
        <begin position="109"/>
        <end position="114"/>
    </location>
</feature>
<feature type="helix" evidence="19">
    <location>
        <begin position="120"/>
        <end position="123"/>
    </location>
</feature>
<feature type="helix" evidence="19">
    <location>
        <begin position="128"/>
        <end position="130"/>
    </location>
</feature>
<feature type="strand" evidence="19">
    <location>
        <begin position="131"/>
        <end position="133"/>
    </location>
</feature>
<feature type="strand" evidence="19">
    <location>
        <begin position="136"/>
        <end position="143"/>
    </location>
</feature>
<feature type="turn" evidence="19">
    <location>
        <begin position="144"/>
        <end position="146"/>
    </location>
</feature>
<feature type="helix" evidence="19">
    <location>
        <begin position="153"/>
        <end position="159"/>
    </location>
</feature>
<feature type="strand" evidence="20">
    <location>
        <begin position="161"/>
        <end position="163"/>
    </location>
</feature>
<feature type="turn" evidence="19">
    <location>
        <begin position="171"/>
        <end position="173"/>
    </location>
</feature>
<feature type="strand" evidence="19">
    <location>
        <begin position="176"/>
        <end position="181"/>
    </location>
</feature>
<feature type="helix" evidence="19">
    <location>
        <begin position="191"/>
        <end position="208"/>
    </location>
</feature>
<feature type="strand" evidence="21">
    <location>
        <begin position="210"/>
        <end position="214"/>
    </location>
</feature>
<feature type="strand" evidence="19">
    <location>
        <begin position="218"/>
        <end position="223"/>
    </location>
</feature>
<feature type="turn" evidence="19">
    <location>
        <begin position="229"/>
        <end position="232"/>
    </location>
</feature>
<feature type="helix" evidence="19">
    <location>
        <begin position="233"/>
        <end position="237"/>
    </location>
</feature>
<feature type="strand" evidence="19">
    <location>
        <begin position="242"/>
        <end position="250"/>
    </location>
</feature>
<feature type="helix" evidence="19">
    <location>
        <begin position="254"/>
        <end position="257"/>
    </location>
</feature>
<feature type="strand" evidence="19">
    <location>
        <begin position="264"/>
        <end position="266"/>
    </location>
</feature>
<feature type="helix" evidence="19">
    <location>
        <begin position="270"/>
        <end position="281"/>
    </location>
</feature>
<feature type="helix" evidence="19">
    <location>
        <begin position="284"/>
        <end position="291"/>
    </location>
</feature>
<feature type="helix" evidence="18">
    <location>
        <begin position="304"/>
        <end position="313"/>
    </location>
</feature>
<evidence type="ECO:0000255" key="1">
    <source>
        <dbReference type="PROSITE-ProRule" id="PRU00236"/>
    </source>
</evidence>
<evidence type="ECO:0000256" key="2">
    <source>
        <dbReference type="SAM" id="MobiDB-lite"/>
    </source>
</evidence>
<evidence type="ECO:0000269" key="3">
    <source>
    </source>
</evidence>
<evidence type="ECO:0000269" key="4">
    <source>
    </source>
</evidence>
<evidence type="ECO:0000269" key="5">
    <source>
    </source>
</evidence>
<evidence type="ECO:0000269" key="6">
    <source>
    </source>
</evidence>
<evidence type="ECO:0000269" key="7">
    <source>
    </source>
</evidence>
<evidence type="ECO:0000269" key="8">
    <source>
    </source>
</evidence>
<evidence type="ECO:0000269" key="9">
    <source>
    </source>
</evidence>
<evidence type="ECO:0000269" key="10">
    <source>
    </source>
</evidence>
<evidence type="ECO:0000269" key="11">
    <source>
    </source>
</evidence>
<evidence type="ECO:0000269" key="12">
    <source>
    </source>
</evidence>
<evidence type="ECO:0000269" key="13">
    <source>
    </source>
</evidence>
<evidence type="ECO:0000269" key="14">
    <source>
    </source>
</evidence>
<evidence type="ECO:0000305" key="15"/>
<evidence type="ECO:0007744" key="16">
    <source>
    </source>
</evidence>
<evidence type="ECO:0007744" key="17">
    <source>
    </source>
</evidence>
<evidence type="ECO:0007829" key="18">
    <source>
        <dbReference type="PDB" id="1Q14"/>
    </source>
</evidence>
<evidence type="ECO:0007829" key="19">
    <source>
        <dbReference type="PDB" id="1Q1A"/>
    </source>
</evidence>
<evidence type="ECO:0007829" key="20">
    <source>
        <dbReference type="PDB" id="1SZD"/>
    </source>
</evidence>
<evidence type="ECO:0007829" key="21">
    <source>
        <dbReference type="PDB" id="7F51"/>
    </source>
</evidence>
<dbReference type="EC" id="2.3.1.286" evidence="1"/>
<dbReference type="EMBL" id="U39063">
    <property type="protein sequence ID" value="AAA81035.1"/>
    <property type="molecule type" value="Genomic_DNA"/>
</dbReference>
<dbReference type="EMBL" id="U33335">
    <property type="protein sequence ID" value="AAB68090.1"/>
    <property type="molecule type" value="Genomic_DNA"/>
</dbReference>
<dbReference type="EMBL" id="AY693204">
    <property type="protein sequence ID" value="AAT93223.1"/>
    <property type="molecule type" value="Genomic_DNA"/>
</dbReference>
<dbReference type="EMBL" id="BK006949">
    <property type="protein sequence ID" value="DAA11413.1"/>
    <property type="molecule type" value="Genomic_DNA"/>
</dbReference>
<dbReference type="PIR" id="S59678">
    <property type="entry name" value="S59678"/>
</dbReference>
<dbReference type="RefSeq" id="NP_015310.1">
    <property type="nucleotide sequence ID" value="NM_001183829.1"/>
</dbReference>
<dbReference type="PDB" id="1Q14">
    <property type="method" value="X-ray"/>
    <property type="resolution" value="2.50 A"/>
    <property type="chains" value="A=1-357"/>
</dbReference>
<dbReference type="PDB" id="1Q17">
    <property type="method" value="X-ray"/>
    <property type="resolution" value="2.70 A"/>
    <property type="chains" value="A/B/C=1-294"/>
</dbReference>
<dbReference type="PDB" id="1Q1A">
    <property type="method" value="X-ray"/>
    <property type="resolution" value="1.50 A"/>
    <property type="chains" value="A=5-293"/>
</dbReference>
<dbReference type="PDB" id="1SZC">
    <property type="method" value="X-ray"/>
    <property type="resolution" value="1.75 A"/>
    <property type="chains" value="A=1-294"/>
</dbReference>
<dbReference type="PDB" id="1SZD">
    <property type="method" value="X-ray"/>
    <property type="resolution" value="1.50 A"/>
    <property type="chains" value="A=1-294"/>
</dbReference>
<dbReference type="PDB" id="2OD2">
    <property type="method" value="X-ray"/>
    <property type="resolution" value="2.00 A"/>
    <property type="chains" value="A=1-294"/>
</dbReference>
<dbReference type="PDB" id="2OD7">
    <property type="method" value="X-ray"/>
    <property type="resolution" value="2.00 A"/>
    <property type="chains" value="A=1-294"/>
</dbReference>
<dbReference type="PDB" id="2OD9">
    <property type="method" value="X-ray"/>
    <property type="resolution" value="2.05 A"/>
    <property type="chains" value="A=1-294"/>
</dbReference>
<dbReference type="PDB" id="2QQF">
    <property type="method" value="X-ray"/>
    <property type="resolution" value="2.00 A"/>
    <property type="chains" value="A=1-294"/>
</dbReference>
<dbReference type="PDB" id="2QQG">
    <property type="method" value="X-ray"/>
    <property type="resolution" value="2.05 A"/>
    <property type="chains" value="A=1-294"/>
</dbReference>
<dbReference type="PDB" id="7F4E">
    <property type="method" value="X-ray"/>
    <property type="resolution" value="1.78 A"/>
    <property type="chains" value="A=8-294"/>
</dbReference>
<dbReference type="PDB" id="7F51">
    <property type="method" value="X-ray"/>
    <property type="resolution" value="1.98 A"/>
    <property type="chains" value="A=8-294"/>
</dbReference>
<dbReference type="PDBsum" id="1Q14"/>
<dbReference type="PDBsum" id="1Q17"/>
<dbReference type="PDBsum" id="1Q1A"/>
<dbReference type="PDBsum" id="1SZC"/>
<dbReference type="PDBsum" id="1SZD"/>
<dbReference type="PDBsum" id="2OD2"/>
<dbReference type="PDBsum" id="2OD7"/>
<dbReference type="PDBsum" id="2OD9"/>
<dbReference type="PDBsum" id="2QQF"/>
<dbReference type="PDBsum" id="2QQG"/>
<dbReference type="PDBsum" id="7F4E"/>
<dbReference type="PDBsum" id="7F51"/>
<dbReference type="SMR" id="P53686"/>
<dbReference type="BioGRID" id="36162">
    <property type="interactions" value="178"/>
</dbReference>
<dbReference type="FunCoup" id="P53686">
    <property type="interactions" value="557"/>
</dbReference>
<dbReference type="IntAct" id="P53686">
    <property type="interactions" value="3"/>
</dbReference>
<dbReference type="MINT" id="P53686"/>
<dbReference type="STRING" id="4932.YPL015C"/>
<dbReference type="BindingDB" id="P53686"/>
<dbReference type="ChEMBL" id="CHEMBL5933"/>
<dbReference type="DrugCentral" id="P53686"/>
<dbReference type="iPTMnet" id="P53686"/>
<dbReference type="PaxDb" id="4932-YPL015C"/>
<dbReference type="PeptideAtlas" id="P53686"/>
<dbReference type="EnsemblFungi" id="YPL015C_mRNA">
    <property type="protein sequence ID" value="YPL015C"/>
    <property type="gene ID" value="YPL015C"/>
</dbReference>
<dbReference type="GeneID" id="856092"/>
<dbReference type="KEGG" id="sce:YPL015C"/>
<dbReference type="AGR" id="SGD:S000005936"/>
<dbReference type="SGD" id="S000005936">
    <property type="gene designation" value="HST2"/>
</dbReference>
<dbReference type="VEuPathDB" id="FungiDB:YPL015C"/>
<dbReference type="eggNOG" id="KOG2682">
    <property type="taxonomic scope" value="Eukaryota"/>
</dbReference>
<dbReference type="GeneTree" id="ENSGT00940000157514"/>
<dbReference type="HOGENOM" id="CLU_023643_7_2_1"/>
<dbReference type="InParanoid" id="P53686"/>
<dbReference type="OMA" id="ATHSCID"/>
<dbReference type="OrthoDB" id="420264at2759"/>
<dbReference type="BioCyc" id="YEAST:G3O-33934-MONOMER"/>
<dbReference type="BRENDA" id="2.3.1.286">
    <property type="organism ID" value="984"/>
</dbReference>
<dbReference type="Reactome" id="R-SCE-2151201">
    <property type="pathway name" value="Transcriptional activation of mitochondrial biogenesis"/>
</dbReference>
<dbReference type="SABIO-RK" id="P53686"/>
<dbReference type="BioGRID-ORCS" id="856092">
    <property type="hits" value="1 hit in 10 CRISPR screens"/>
</dbReference>
<dbReference type="CD-CODE" id="E03F929F">
    <property type="entry name" value="Stress granule"/>
</dbReference>
<dbReference type="EvolutionaryTrace" id="P53686"/>
<dbReference type="PRO" id="PR:P53686"/>
<dbReference type="Proteomes" id="UP000002311">
    <property type="component" value="Chromosome XVI"/>
</dbReference>
<dbReference type="RNAct" id="P53686">
    <property type="molecule type" value="protein"/>
</dbReference>
<dbReference type="GO" id="GO:0005737">
    <property type="term" value="C:cytoplasm"/>
    <property type="evidence" value="ECO:0000314"/>
    <property type="project" value="SGD"/>
</dbReference>
<dbReference type="GO" id="GO:0005634">
    <property type="term" value="C:nucleus"/>
    <property type="evidence" value="ECO:0000314"/>
    <property type="project" value="SGD"/>
</dbReference>
<dbReference type="GO" id="GO:0017136">
    <property type="term" value="F:histone deacetylase activity, NAD-dependent"/>
    <property type="evidence" value="ECO:0000314"/>
    <property type="project" value="SGD"/>
</dbReference>
<dbReference type="GO" id="GO:0046970">
    <property type="term" value="F:histone H4K16 deacetylase activity, NAD-dependent"/>
    <property type="evidence" value="ECO:0000314"/>
    <property type="project" value="UniProtKB"/>
</dbReference>
<dbReference type="GO" id="GO:0046872">
    <property type="term" value="F:metal ion binding"/>
    <property type="evidence" value="ECO:0007669"/>
    <property type="project" value="UniProtKB-KW"/>
</dbReference>
<dbReference type="GO" id="GO:0070403">
    <property type="term" value="F:NAD+ binding"/>
    <property type="evidence" value="ECO:0000318"/>
    <property type="project" value="GO_Central"/>
</dbReference>
<dbReference type="GO" id="GO:0045950">
    <property type="term" value="P:negative regulation of mitotic recombination"/>
    <property type="evidence" value="ECO:0000315"/>
    <property type="project" value="SGD"/>
</dbReference>
<dbReference type="GO" id="GO:0000183">
    <property type="term" value="P:rDNA heterochromatin formation"/>
    <property type="evidence" value="ECO:0000315"/>
    <property type="project" value="SGD"/>
</dbReference>
<dbReference type="CDD" id="cd01408">
    <property type="entry name" value="SIRT1"/>
    <property type="match status" value="1"/>
</dbReference>
<dbReference type="Gene3D" id="3.30.1600.10">
    <property type="entry name" value="SIR2/SIRT2 'Small Domain"/>
    <property type="match status" value="1"/>
</dbReference>
<dbReference type="Gene3D" id="3.40.50.1220">
    <property type="entry name" value="TPP-binding domain"/>
    <property type="match status" value="1"/>
</dbReference>
<dbReference type="InterPro" id="IPR029035">
    <property type="entry name" value="DHS-like_NAD/FAD-binding_dom"/>
</dbReference>
<dbReference type="InterPro" id="IPR050134">
    <property type="entry name" value="NAD-dep_sirtuin_deacylases"/>
</dbReference>
<dbReference type="InterPro" id="IPR003000">
    <property type="entry name" value="Sirtuin"/>
</dbReference>
<dbReference type="InterPro" id="IPR026591">
    <property type="entry name" value="Sirtuin_cat_small_dom_sf"/>
</dbReference>
<dbReference type="InterPro" id="IPR017328">
    <property type="entry name" value="Sirtuin_class_I"/>
</dbReference>
<dbReference type="InterPro" id="IPR026590">
    <property type="entry name" value="Ssirtuin_cat_dom"/>
</dbReference>
<dbReference type="PANTHER" id="PTHR11085:SF6">
    <property type="entry name" value="NAD-DEPENDENT PROTEIN DEACETYLASE SIRTUIN-2"/>
    <property type="match status" value="1"/>
</dbReference>
<dbReference type="PANTHER" id="PTHR11085">
    <property type="entry name" value="NAD-DEPENDENT PROTEIN DEACYLASE SIRTUIN-5, MITOCHONDRIAL-RELATED"/>
    <property type="match status" value="1"/>
</dbReference>
<dbReference type="Pfam" id="PF02146">
    <property type="entry name" value="SIR2"/>
    <property type="match status" value="1"/>
</dbReference>
<dbReference type="PIRSF" id="PIRSF037938">
    <property type="entry name" value="SIR2_euk"/>
    <property type="match status" value="1"/>
</dbReference>
<dbReference type="SUPFAM" id="SSF52467">
    <property type="entry name" value="DHS-like NAD/FAD-binding domain"/>
    <property type="match status" value="1"/>
</dbReference>
<dbReference type="PROSITE" id="PS50305">
    <property type="entry name" value="SIRTUIN"/>
    <property type="match status" value="1"/>
</dbReference>